<keyword id="KW-0025">Alternative splicing</keyword>
<keyword id="KW-0966">Cell projection</keyword>
<keyword id="KW-0963">Cytoplasm</keyword>
<keyword id="KW-0225">Disease variant</keyword>
<keyword id="KW-0254">Endocytosis</keyword>
<keyword id="KW-0343">GTPase activation</keyword>
<keyword id="KW-0991">Intellectual disability</keyword>
<keyword id="KW-0524">Neurogenesis</keyword>
<keyword id="KW-1267">Proteomics identification</keyword>
<keyword id="KW-1185">Reference proteome</keyword>
<keyword id="KW-0770">Synapse</keyword>
<comment type="function">
    <text evidence="1">Stimulates GTP hydrolysis of members of the Rho family. Its action on RHOA activity and signaling is implicated in growth and stabilization of dendritic spines, and therefore in synaptic function. Critical for the stabilization of AMPA receptors at postsynaptic sites. Critical for the regulation of synaptic vesicle endocytosis at presynaptic terminals. Required for the localization of NR1D1 to dendrites, can suppress its repressor activity and protect it from proteasomal degradation (By similarity).</text>
</comment>
<comment type="subunit">
    <text evidence="1">Interacts with HOMER1. Interacts with AMPA receptor complexes. Interacts with SH3GL2 (endophilin-A1) (By similarity). Interacts (via C-terminus) with NR1D1 (By similarity).</text>
</comment>
<comment type="subcellular location">
    <subcellularLocation>
        <location evidence="2">Postsynapse</location>
    </subcellularLocation>
    <subcellularLocation>
        <location evidence="2">Presynapse</location>
    </subcellularLocation>
    <subcellularLocation>
        <location evidence="2">Cell projection</location>
        <location evidence="2">Axon</location>
    </subcellularLocation>
    <subcellularLocation>
        <location evidence="2">Cell projection</location>
        <location evidence="2">Dendritic spine</location>
    </subcellularLocation>
    <subcellularLocation>
        <location evidence="3">Cell projection</location>
        <location evidence="3">Dendrite</location>
    </subcellularLocation>
    <subcellularLocation>
        <location evidence="3">Cytoplasm</location>
    </subcellularLocation>
</comment>
<comment type="alternative products">
    <event type="alternative splicing"/>
    <isoform>
        <id>O60890-1</id>
        <name>1</name>
        <sequence type="displayed"/>
    </isoform>
    <isoform>
        <id>O60890-2</id>
        <name>2</name>
        <sequence type="described" ref="VSP_055336 VSP_055337"/>
    </isoform>
</comment>
<comment type="tissue specificity">
    <text>Expressed in brain.</text>
</comment>
<comment type="disease" evidence="7 10 11">
    <disease id="DI-00719">
        <name>Intellectual developmental disorder, X-linked, syndromic, Billuart type</name>
        <acronym>MRXSBL</acronym>
        <description>A disorder characterized by significantly below average general intellectual functioning associated with impairments in adaptive behavior and manifested during the developmental period. MRXSBL patients manifest intellectual disability associated with cerebellar hypoplasia and distinctive facial dysmorphism.</description>
        <dbReference type="MIM" id="300486"/>
    </disease>
    <text>The disease is caused by variants affecting the gene represented in this entry.</text>
</comment>
<dbReference type="EMBL" id="AJ001189">
    <property type="protein sequence ID" value="CAA04579.1"/>
    <property type="molecule type" value="mRNA"/>
</dbReference>
<dbReference type="EMBL" id="AJ248245">
    <property type="protein sequence ID" value="CAB96181.1"/>
    <property type="molecule type" value="Genomic_DNA"/>
</dbReference>
<dbReference type="EMBL" id="AJ248246">
    <property type="protein sequence ID" value="CAB96181.1"/>
    <property type="status" value="JOINED"/>
    <property type="molecule type" value="Genomic_DNA"/>
</dbReference>
<dbReference type="EMBL" id="AJ248247">
    <property type="protein sequence ID" value="CAB96181.1"/>
    <property type="status" value="JOINED"/>
    <property type="molecule type" value="Genomic_DNA"/>
</dbReference>
<dbReference type="EMBL" id="AJ248248">
    <property type="protein sequence ID" value="CAB96181.1"/>
    <property type="status" value="JOINED"/>
    <property type="molecule type" value="Genomic_DNA"/>
</dbReference>
<dbReference type="EMBL" id="AJ248249">
    <property type="protein sequence ID" value="CAB96181.1"/>
    <property type="status" value="JOINED"/>
    <property type="molecule type" value="Genomic_DNA"/>
</dbReference>
<dbReference type="EMBL" id="AJ248250">
    <property type="protein sequence ID" value="CAB96181.1"/>
    <property type="status" value="JOINED"/>
    <property type="molecule type" value="Genomic_DNA"/>
</dbReference>
<dbReference type="EMBL" id="AJ248251">
    <property type="protein sequence ID" value="CAB96181.1"/>
    <property type="status" value="JOINED"/>
    <property type="molecule type" value="Genomic_DNA"/>
</dbReference>
<dbReference type="EMBL" id="AJ248252">
    <property type="protein sequence ID" value="CAB96181.1"/>
    <property type="status" value="JOINED"/>
    <property type="molecule type" value="Genomic_DNA"/>
</dbReference>
<dbReference type="EMBL" id="AJ248253">
    <property type="protein sequence ID" value="CAB96181.1"/>
    <property type="status" value="JOINED"/>
    <property type="molecule type" value="Genomic_DNA"/>
</dbReference>
<dbReference type="EMBL" id="AJ248254">
    <property type="protein sequence ID" value="CAB96181.1"/>
    <property type="status" value="JOINED"/>
    <property type="molecule type" value="Genomic_DNA"/>
</dbReference>
<dbReference type="EMBL" id="AJ248255">
    <property type="protein sequence ID" value="CAB96181.1"/>
    <property type="status" value="JOINED"/>
    <property type="molecule type" value="Genomic_DNA"/>
</dbReference>
<dbReference type="EMBL" id="AJ248256">
    <property type="protein sequence ID" value="CAB96181.1"/>
    <property type="status" value="JOINED"/>
    <property type="molecule type" value="Genomic_DNA"/>
</dbReference>
<dbReference type="EMBL" id="AJ248257">
    <property type="protein sequence ID" value="CAB96181.1"/>
    <property type="status" value="JOINED"/>
    <property type="molecule type" value="Genomic_DNA"/>
</dbReference>
<dbReference type="EMBL" id="AJ248258">
    <property type="protein sequence ID" value="CAB96181.1"/>
    <property type="status" value="JOINED"/>
    <property type="molecule type" value="Genomic_DNA"/>
</dbReference>
<dbReference type="EMBL" id="AJ248259">
    <property type="protein sequence ID" value="CAB96181.1"/>
    <property type="status" value="JOINED"/>
    <property type="molecule type" value="Genomic_DNA"/>
</dbReference>
<dbReference type="EMBL" id="AJ248260">
    <property type="protein sequence ID" value="CAB96181.1"/>
    <property type="status" value="JOINED"/>
    <property type="molecule type" value="Genomic_DNA"/>
</dbReference>
<dbReference type="EMBL" id="AJ248261">
    <property type="protein sequence ID" value="CAB96181.1"/>
    <property type="status" value="JOINED"/>
    <property type="molecule type" value="Genomic_DNA"/>
</dbReference>
<dbReference type="EMBL" id="AJ248262">
    <property type="protein sequence ID" value="CAB96181.1"/>
    <property type="status" value="JOINED"/>
    <property type="molecule type" value="Genomic_DNA"/>
</dbReference>
<dbReference type="EMBL" id="AJ248263">
    <property type="protein sequence ID" value="CAB96181.1"/>
    <property type="status" value="JOINED"/>
    <property type="molecule type" value="Genomic_DNA"/>
</dbReference>
<dbReference type="EMBL" id="AJ248264">
    <property type="protein sequence ID" value="CAB96181.1"/>
    <property type="status" value="JOINED"/>
    <property type="molecule type" value="Genomic_DNA"/>
</dbReference>
<dbReference type="EMBL" id="AJ248265">
    <property type="protein sequence ID" value="CAB96181.1"/>
    <property type="status" value="JOINED"/>
    <property type="molecule type" value="Genomic_DNA"/>
</dbReference>
<dbReference type="EMBL" id="AJ248266">
    <property type="protein sequence ID" value="CAB96181.1"/>
    <property type="status" value="JOINED"/>
    <property type="molecule type" value="Genomic_DNA"/>
</dbReference>
<dbReference type="EMBL" id="AJ248267">
    <property type="protein sequence ID" value="CAB96181.1"/>
    <property type="status" value="JOINED"/>
    <property type="molecule type" value="Genomic_DNA"/>
</dbReference>
<dbReference type="EMBL" id="AB102656">
    <property type="protein sequence ID" value="BAC81125.1"/>
    <property type="molecule type" value="mRNA"/>
</dbReference>
<dbReference type="EMBL" id="AL157700">
    <property type="protein sequence ID" value="CAD18899.2"/>
    <property type="molecule type" value="Genomic_DNA"/>
</dbReference>
<dbReference type="EMBL" id="AL158201">
    <property type="protein sequence ID" value="CAD18899.2"/>
    <property type="status" value="JOINED"/>
    <property type="molecule type" value="Genomic_DNA"/>
</dbReference>
<dbReference type="EMBL" id="AL672138">
    <property type="protein sequence ID" value="CAD18899.2"/>
    <property type="status" value="JOINED"/>
    <property type="molecule type" value="Genomic_DNA"/>
</dbReference>
<dbReference type="EMBL" id="Z82203">
    <property type="protein sequence ID" value="CAD18899.2"/>
    <property type="status" value="JOINED"/>
    <property type="molecule type" value="Genomic_DNA"/>
</dbReference>
<dbReference type="EMBL" id="AL158201">
    <property type="protein sequence ID" value="CAI40982.1"/>
    <property type="molecule type" value="Genomic_DNA"/>
</dbReference>
<dbReference type="EMBL" id="AL157700">
    <property type="protein sequence ID" value="CAI40982.1"/>
    <property type="status" value="JOINED"/>
    <property type="molecule type" value="Genomic_DNA"/>
</dbReference>
<dbReference type="EMBL" id="AL672138">
    <property type="protein sequence ID" value="CAI40982.1"/>
    <property type="status" value="JOINED"/>
    <property type="molecule type" value="Genomic_DNA"/>
</dbReference>
<dbReference type="EMBL" id="Z82203">
    <property type="protein sequence ID" value="CAI40982.1"/>
    <property type="status" value="JOINED"/>
    <property type="molecule type" value="Genomic_DNA"/>
</dbReference>
<dbReference type="EMBL" id="AL672138">
    <property type="protein sequence ID" value="CAI41508.1"/>
    <property type="molecule type" value="Genomic_DNA"/>
</dbReference>
<dbReference type="EMBL" id="AL157700">
    <property type="protein sequence ID" value="CAI41508.1"/>
    <property type="status" value="JOINED"/>
    <property type="molecule type" value="Genomic_DNA"/>
</dbReference>
<dbReference type="EMBL" id="AL158201">
    <property type="protein sequence ID" value="CAI41508.1"/>
    <property type="status" value="JOINED"/>
    <property type="molecule type" value="Genomic_DNA"/>
</dbReference>
<dbReference type="EMBL" id="Z82203">
    <property type="protein sequence ID" value="CAI41508.1"/>
    <property type="status" value="JOINED"/>
    <property type="molecule type" value="Genomic_DNA"/>
</dbReference>
<dbReference type="EMBL" id="Z82203">
    <property type="protein sequence ID" value="CAI42695.1"/>
    <property type="molecule type" value="Genomic_DNA"/>
</dbReference>
<dbReference type="EMBL" id="AL157700">
    <property type="protein sequence ID" value="CAI42695.1"/>
    <property type="status" value="JOINED"/>
    <property type="molecule type" value="Genomic_DNA"/>
</dbReference>
<dbReference type="EMBL" id="AL158201">
    <property type="protein sequence ID" value="CAI42695.1"/>
    <property type="status" value="JOINED"/>
    <property type="molecule type" value="Genomic_DNA"/>
</dbReference>
<dbReference type="EMBL" id="AL672138">
    <property type="protein sequence ID" value="CAI42695.1"/>
    <property type="status" value="JOINED"/>
    <property type="molecule type" value="Genomic_DNA"/>
</dbReference>
<dbReference type="EMBL" id="BC059393">
    <property type="protein sequence ID" value="AAH59393.1"/>
    <property type="molecule type" value="mRNA"/>
</dbReference>
<dbReference type="EMBL" id="BC140763">
    <property type="protein sequence ID" value="AAI40764.1"/>
    <property type="molecule type" value="mRNA"/>
</dbReference>
<dbReference type="CCDS" id="CCDS14388.1">
    <molecule id="O60890-1"/>
</dbReference>
<dbReference type="PIR" id="H59434">
    <property type="entry name" value="H59434"/>
</dbReference>
<dbReference type="RefSeq" id="NP_002538.1">
    <molecule id="O60890-1"/>
    <property type="nucleotide sequence ID" value="NM_002547.3"/>
</dbReference>
<dbReference type="RefSeq" id="XP_011529263.1">
    <molecule id="O60890-1"/>
    <property type="nucleotide sequence ID" value="XM_011530961.2"/>
</dbReference>
<dbReference type="SMR" id="O60890"/>
<dbReference type="BioGRID" id="111029">
    <property type="interactions" value="9"/>
</dbReference>
<dbReference type="FunCoup" id="O60890">
    <property type="interactions" value="901"/>
</dbReference>
<dbReference type="IntAct" id="O60890">
    <property type="interactions" value="4"/>
</dbReference>
<dbReference type="STRING" id="9606.ENSP00000347710"/>
<dbReference type="GlyGen" id="O60890">
    <property type="glycosylation" value="3 sites, 1 O-linked glycan (2 sites)"/>
</dbReference>
<dbReference type="iPTMnet" id="O60890"/>
<dbReference type="PhosphoSitePlus" id="O60890"/>
<dbReference type="SwissPalm" id="O60890"/>
<dbReference type="BioMuta" id="OPHN1"/>
<dbReference type="jPOST" id="O60890"/>
<dbReference type="MassIVE" id="O60890"/>
<dbReference type="PaxDb" id="9606-ENSP00000347710"/>
<dbReference type="PeptideAtlas" id="O60890"/>
<dbReference type="ProteomicsDB" id="49656">
    <molecule id="O60890-1"/>
</dbReference>
<dbReference type="Antibodypedia" id="494">
    <property type="antibodies" value="103 antibodies from 23 providers"/>
</dbReference>
<dbReference type="DNASU" id="4983"/>
<dbReference type="Ensembl" id="ENST00000355520.6">
    <molecule id="O60890-1"/>
    <property type="protein sequence ID" value="ENSP00000347710.5"/>
    <property type="gene ID" value="ENSG00000079482.14"/>
</dbReference>
<dbReference type="GeneID" id="4983"/>
<dbReference type="KEGG" id="hsa:4983"/>
<dbReference type="MANE-Select" id="ENST00000355520.6">
    <property type="protein sequence ID" value="ENSP00000347710.5"/>
    <property type="RefSeq nucleotide sequence ID" value="NM_002547.3"/>
    <property type="RefSeq protein sequence ID" value="NP_002538.1"/>
</dbReference>
<dbReference type="UCSC" id="uc004dww.5">
    <molecule id="O60890-1"/>
    <property type="organism name" value="human"/>
</dbReference>
<dbReference type="AGR" id="HGNC:8148"/>
<dbReference type="CTD" id="4983"/>
<dbReference type="DisGeNET" id="4983"/>
<dbReference type="GeneCards" id="OPHN1"/>
<dbReference type="HGNC" id="HGNC:8148">
    <property type="gene designation" value="OPHN1"/>
</dbReference>
<dbReference type="HPA" id="ENSG00000079482">
    <property type="expression patterns" value="Low tissue specificity"/>
</dbReference>
<dbReference type="MalaCards" id="OPHN1"/>
<dbReference type="MIM" id="300127">
    <property type="type" value="gene"/>
</dbReference>
<dbReference type="MIM" id="300486">
    <property type="type" value="phenotype"/>
</dbReference>
<dbReference type="neXtProt" id="NX_O60890"/>
<dbReference type="OpenTargets" id="ENSG00000079482"/>
<dbReference type="Orphanet" id="137831">
    <property type="disease" value="X-linked intellectual disability-cerebellar hypoplasia syndrome"/>
</dbReference>
<dbReference type="PharmGKB" id="PA31934"/>
<dbReference type="VEuPathDB" id="HostDB:ENSG00000079482"/>
<dbReference type="eggNOG" id="KOG1451">
    <property type="taxonomic scope" value="Eukaryota"/>
</dbReference>
<dbReference type="GeneTree" id="ENSGT00940000160157"/>
<dbReference type="HOGENOM" id="CLU_011532_2_1_1"/>
<dbReference type="InParanoid" id="O60890"/>
<dbReference type="OMA" id="KEAPQMC"/>
<dbReference type="OrthoDB" id="3183924at2759"/>
<dbReference type="PAN-GO" id="O60890">
    <property type="GO annotations" value="10 GO annotations based on evolutionary models"/>
</dbReference>
<dbReference type="PhylomeDB" id="O60890"/>
<dbReference type="TreeFam" id="TF316851"/>
<dbReference type="PathwayCommons" id="O60890"/>
<dbReference type="Reactome" id="R-HSA-8980692">
    <property type="pathway name" value="RHOA GTPase cycle"/>
</dbReference>
<dbReference type="Reactome" id="R-HSA-9013026">
    <property type="pathway name" value="RHOB GTPase cycle"/>
</dbReference>
<dbReference type="Reactome" id="R-HSA-9013106">
    <property type="pathway name" value="RHOC GTPase cycle"/>
</dbReference>
<dbReference type="Reactome" id="R-HSA-9013148">
    <property type="pathway name" value="CDC42 GTPase cycle"/>
</dbReference>
<dbReference type="Reactome" id="R-HSA-9013149">
    <property type="pathway name" value="RAC1 GTPase cycle"/>
</dbReference>
<dbReference type="Reactome" id="R-HSA-9013404">
    <property type="pathway name" value="RAC2 GTPase cycle"/>
</dbReference>
<dbReference type="Reactome" id="R-HSA-9013406">
    <property type="pathway name" value="RHOQ GTPase cycle"/>
</dbReference>
<dbReference type="Reactome" id="R-HSA-9013408">
    <property type="pathway name" value="RHOG GTPase cycle"/>
</dbReference>
<dbReference type="Reactome" id="R-HSA-9013409">
    <property type="pathway name" value="RHOJ GTPase cycle"/>
</dbReference>
<dbReference type="Reactome" id="R-HSA-9013423">
    <property type="pathway name" value="RAC3 GTPase cycle"/>
</dbReference>
<dbReference type="SignaLink" id="O60890"/>
<dbReference type="SIGNOR" id="O60890"/>
<dbReference type="BioGRID-ORCS" id="4983">
    <property type="hits" value="11 hits in 781 CRISPR screens"/>
</dbReference>
<dbReference type="ChiTaRS" id="OPHN1">
    <property type="organism name" value="human"/>
</dbReference>
<dbReference type="GeneWiki" id="OPHN1"/>
<dbReference type="GenomeRNAi" id="4983"/>
<dbReference type="Pharos" id="O60890">
    <property type="development level" value="Tbio"/>
</dbReference>
<dbReference type="PRO" id="PR:O60890"/>
<dbReference type="Proteomes" id="UP000005640">
    <property type="component" value="Chromosome X"/>
</dbReference>
<dbReference type="RNAct" id="O60890">
    <property type="molecule type" value="protein"/>
</dbReference>
<dbReference type="Bgee" id="ENSG00000079482">
    <property type="expression patterns" value="Expressed in corpus callosum and 108 other cell types or tissues"/>
</dbReference>
<dbReference type="GO" id="GO:0015629">
    <property type="term" value="C:actin cytoskeleton"/>
    <property type="evidence" value="ECO:0000318"/>
    <property type="project" value="GO_Central"/>
</dbReference>
<dbReference type="GO" id="GO:0005737">
    <property type="term" value="C:cytoplasm"/>
    <property type="evidence" value="ECO:0000318"/>
    <property type="project" value="GO_Central"/>
</dbReference>
<dbReference type="GO" id="GO:0043197">
    <property type="term" value="C:dendritic spine"/>
    <property type="evidence" value="ECO:0000318"/>
    <property type="project" value="GO_Central"/>
</dbReference>
<dbReference type="GO" id="GO:0098978">
    <property type="term" value="C:glutamatergic synapse"/>
    <property type="evidence" value="ECO:0000314"/>
    <property type="project" value="SynGO"/>
</dbReference>
<dbReference type="GO" id="GO:0043195">
    <property type="term" value="C:terminal bouton"/>
    <property type="evidence" value="ECO:0000318"/>
    <property type="project" value="GO_Central"/>
</dbReference>
<dbReference type="GO" id="GO:0003779">
    <property type="term" value="F:actin binding"/>
    <property type="evidence" value="ECO:0007669"/>
    <property type="project" value="Ensembl"/>
</dbReference>
<dbReference type="GO" id="GO:0005096">
    <property type="term" value="F:GTPase activator activity"/>
    <property type="evidence" value="ECO:0000318"/>
    <property type="project" value="GO_Central"/>
</dbReference>
<dbReference type="GO" id="GO:0035255">
    <property type="term" value="F:ionotropic glutamate receptor binding"/>
    <property type="evidence" value="ECO:0007669"/>
    <property type="project" value="Ensembl"/>
</dbReference>
<dbReference type="GO" id="GO:0005543">
    <property type="term" value="F:phospholipid binding"/>
    <property type="evidence" value="ECO:0000314"/>
    <property type="project" value="FlyBase"/>
</dbReference>
<dbReference type="GO" id="GO:0030036">
    <property type="term" value="P:actin cytoskeleton organization"/>
    <property type="evidence" value="ECO:0000318"/>
    <property type="project" value="GO_Central"/>
</dbReference>
<dbReference type="GO" id="GO:0007411">
    <property type="term" value="P:axon guidance"/>
    <property type="evidence" value="ECO:0000304"/>
    <property type="project" value="ProtInc"/>
</dbReference>
<dbReference type="GO" id="GO:0034329">
    <property type="term" value="P:cell junction assembly"/>
    <property type="evidence" value="ECO:0000315"/>
    <property type="project" value="UniProtKB"/>
</dbReference>
<dbReference type="GO" id="GO:0048667">
    <property type="term" value="P:cell morphogenesis involved in neuron differentiation"/>
    <property type="evidence" value="ECO:0000315"/>
    <property type="project" value="ARUK-UCL"/>
</dbReference>
<dbReference type="GO" id="GO:0021707">
    <property type="term" value="P:cerebellar granule cell differentiation"/>
    <property type="evidence" value="ECO:0000315"/>
    <property type="project" value="ARUK-UCL"/>
</dbReference>
<dbReference type="GO" id="GO:0021895">
    <property type="term" value="P:cerebral cortex neuron differentiation"/>
    <property type="evidence" value="ECO:0000315"/>
    <property type="project" value="ARUK-UCL"/>
</dbReference>
<dbReference type="GO" id="GO:0045198">
    <property type="term" value="P:establishment of epithelial cell apical/basal polarity"/>
    <property type="evidence" value="ECO:0000315"/>
    <property type="project" value="UniProtKB"/>
</dbReference>
<dbReference type="GO" id="GO:0098880">
    <property type="term" value="P:maintenance of postsynaptic specialization structure"/>
    <property type="evidence" value="ECO:0007669"/>
    <property type="project" value="Ensembl"/>
</dbReference>
<dbReference type="GO" id="GO:1901799">
    <property type="term" value="P:negative regulation of proteasomal protein catabolic process"/>
    <property type="evidence" value="ECO:0000318"/>
    <property type="project" value="GO_Central"/>
</dbReference>
<dbReference type="GO" id="GO:0007399">
    <property type="term" value="P:nervous system development"/>
    <property type="evidence" value="ECO:0000304"/>
    <property type="project" value="ProtInc"/>
</dbReference>
<dbReference type="GO" id="GO:0030182">
    <property type="term" value="P:neuron differentiation"/>
    <property type="evidence" value="ECO:0000315"/>
    <property type="project" value="ARUK-UCL"/>
</dbReference>
<dbReference type="GO" id="GO:0031175">
    <property type="term" value="P:neuron projection development"/>
    <property type="evidence" value="ECO:0000315"/>
    <property type="project" value="ARUK-UCL"/>
</dbReference>
<dbReference type="GO" id="GO:0030100">
    <property type="term" value="P:regulation of endocytosis"/>
    <property type="evidence" value="ECO:0000318"/>
    <property type="project" value="GO_Central"/>
</dbReference>
<dbReference type="GO" id="GO:0099149">
    <property type="term" value="P:regulation of postsynaptic neurotransmitter receptor internalization"/>
    <property type="evidence" value="ECO:0000314"/>
    <property type="project" value="SynGO"/>
</dbReference>
<dbReference type="GO" id="GO:0035023">
    <property type="term" value="P:regulation of Rho protein signal transduction"/>
    <property type="evidence" value="ECO:0000315"/>
    <property type="project" value="ARUK-UCL"/>
</dbReference>
<dbReference type="GO" id="GO:0051966">
    <property type="term" value="P:regulation of synaptic transmission, glutamatergic"/>
    <property type="evidence" value="ECO:0000318"/>
    <property type="project" value="GO_Central"/>
</dbReference>
<dbReference type="GO" id="GO:1900242">
    <property type="term" value="P:regulation of synaptic vesicle endocytosis"/>
    <property type="evidence" value="ECO:0007669"/>
    <property type="project" value="Ensembl"/>
</dbReference>
<dbReference type="GO" id="GO:0007165">
    <property type="term" value="P:signal transduction"/>
    <property type="evidence" value="ECO:0000304"/>
    <property type="project" value="ProtInc"/>
</dbReference>
<dbReference type="GO" id="GO:0006930">
    <property type="term" value="P:substrate-dependent cell migration, cell extension"/>
    <property type="evidence" value="ECO:0000304"/>
    <property type="project" value="ProtInc"/>
</dbReference>
<dbReference type="GO" id="GO:0048488">
    <property type="term" value="P:synaptic vesicle endocytosis"/>
    <property type="evidence" value="ECO:0000318"/>
    <property type="project" value="GO_Central"/>
</dbReference>
<dbReference type="CDD" id="cd01249">
    <property type="entry name" value="BAR-PH_GRAF_family"/>
    <property type="match status" value="1"/>
</dbReference>
<dbReference type="CDD" id="cd07633">
    <property type="entry name" value="BAR_OPHN1"/>
    <property type="match status" value="1"/>
</dbReference>
<dbReference type="CDD" id="cd04374">
    <property type="entry name" value="RhoGAP_Graf"/>
    <property type="match status" value="1"/>
</dbReference>
<dbReference type="FunFam" id="2.30.29.30:FF:000183">
    <property type="entry name" value="Oligophrenin 1"/>
    <property type="match status" value="1"/>
</dbReference>
<dbReference type="FunFam" id="1.20.1270.60:FF:000001">
    <property type="entry name" value="Rho GTPase-activating protein 26"/>
    <property type="match status" value="1"/>
</dbReference>
<dbReference type="FunFam" id="1.10.555.10:FF:000008">
    <property type="entry name" value="Rho GTPase-activating protein 42"/>
    <property type="match status" value="1"/>
</dbReference>
<dbReference type="Gene3D" id="1.20.1270.60">
    <property type="entry name" value="Arfaptin homology (AH) domain/BAR domain"/>
    <property type="match status" value="1"/>
</dbReference>
<dbReference type="Gene3D" id="2.30.29.30">
    <property type="entry name" value="Pleckstrin-homology domain (PH domain)/Phosphotyrosine-binding domain (PTB)"/>
    <property type="match status" value="1"/>
</dbReference>
<dbReference type="Gene3D" id="1.10.555.10">
    <property type="entry name" value="Rho GTPase activation protein"/>
    <property type="match status" value="1"/>
</dbReference>
<dbReference type="InterPro" id="IPR027267">
    <property type="entry name" value="AH/BAR_dom_sf"/>
</dbReference>
<dbReference type="InterPro" id="IPR004148">
    <property type="entry name" value="BAR_dom"/>
</dbReference>
<dbReference type="InterPro" id="IPR047234">
    <property type="entry name" value="GRAF_fam"/>
</dbReference>
<dbReference type="InterPro" id="IPR047267">
    <property type="entry name" value="OPHN1_BAR"/>
</dbReference>
<dbReference type="InterPro" id="IPR011993">
    <property type="entry name" value="PH-like_dom_sf"/>
</dbReference>
<dbReference type="InterPro" id="IPR001849">
    <property type="entry name" value="PH_domain"/>
</dbReference>
<dbReference type="InterPro" id="IPR047225">
    <property type="entry name" value="PH_GRAF"/>
</dbReference>
<dbReference type="InterPro" id="IPR008936">
    <property type="entry name" value="Rho_GTPase_activation_prot"/>
</dbReference>
<dbReference type="InterPro" id="IPR000198">
    <property type="entry name" value="RhoGAP_dom"/>
</dbReference>
<dbReference type="PANTHER" id="PTHR12552">
    <property type="entry name" value="OLIGOPHRENIN 1"/>
    <property type="match status" value="1"/>
</dbReference>
<dbReference type="PANTHER" id="PTHR12552:SF2">
    <property type="entry name" value="OLIGOPHRENIN-1"/>
    <property type="match status" value="1"/>
</dbReference>
<dbReference type="Pfam" id="PF16746">
    <property type="entry name" value="BAR_3"/>
    <property type="match status" value="1"/>
</dbReference>
<dbReference type="Pfam" id="PF00169">
    <property type="entry name" value="PH"/>
    <property type="match status" value="1"/>
</dbReference>
<dbReference type="Pfam" id="PF00620">
    <property type="entry name" value="RhoGAP"/>
    <property type="match status" value="1"/>
</dbReference>
<dbReference type="SMART" id="SM00233">
    <property type="entry name" value="PH"/>
    <property type="match status" value="1"/>
</dbReference>
<dbReference type="SMART" id="SM00324">
    <property type="entry name" value="RhoGAP"/>
    <property type="match status" value="1"/>
</dbReference>
<dbReference type="SUPFAM" id="SSF103657">
    <property type="entry name" value="BAR/IMD domain-like"/>
    <property type="match status" value="1"/>
</dbReference>
<dbReference type="SUPFAM" id="SSF48350">
    <property type="entry name" value="GTPase activation domain, GAP"/>
    <property type="match status" value="1"/>
</dbReference>
<dbReference type="SUPFAM" id="SSF50729">
    <property type="entry name" value="PH domain-like"/>
    <property type="match status" value="1"/>
</dbReference>
<dbReference type="PROSITE" id="PS50003">
    <property type="entry name" value="PH_DOMAIN"/>
    <property type="match status" value="1"/>
</dbReference>
<dbReference type="PROSITE" id="PS50238">
    <property type="entry name" value="RHOGAP"/>
    <property type="match status" value="1"/>
</dbReference>
<evidence type="ECO:0000250" key="1"/>
<evidence type="ECO:0000250" key="2">
    <source>
        <dbReference type="UniProtKB" id="P0CAX5"/>
    </source>
</evidence>
<evidence type="ECO:0000250" key="3">
    <source>
        <dbReference type="UniProtKB" id="Q99J31"/>
    </source>
</evidence>
<evidence type="ECO:0000255" key="4">
    <source>
        <dbReference type="PROSITE-ProRule" id="PRU00145"/>
    </source>
</evidence>
<evidence type="ECO:0000255" key="5">
    <source>
        <dbReference type="PROSITE-ProRule" id="PRU00172"/>
    </source>
</evidence>
<evidence type="ECO:0000256" key="6">
    <source>
        <dbReference type="SAM" id="MobiDB-lite"/>
    </source>
</evidence>
<evidence type="ECO:0000269" key="7">
    <source>
    </source>
</evidence>
<evidence type="ECO:0000269" key="8">
    <source>
    </source>
</evidence>
<evidence type="ECO:0000269" key="9">
    <source>
    </source>
</evidence>
<evidence type="ECO:0000269" key="10">
    <source>
    </source>
</evidence>
<evidence type="ECO:0000269" key="11">
    <source>
    </source>
</evidence>
<evidence type="ECO:0000303" key="12">
    <source>
    </source>
</evidence>
<accession>O60890</accession>
<accession>B9EIP8</accession>
<accession>Q5JQ81</accession>
<accession>Q6PCC1</accession>
<accession>Q8WX47</accession>
<name>OPHN1_HUMAN</name>
<sequence>MGHPPLEFSDCYLDSPDFRERLKCYEQELERTNKFIKDVIKDGNALISAMRNYSSAVQKFSQTLQSFQFDFIGDTLTDDEINIAESFKEFAELLNEVENERMMMVHNASDLLIKPLENFRKEQIGFTKERKKKFEKDGERFYSLLDRHLHLSSKKKESQLQEADLQVDKERHNFFESSLDYVYQIQEVQESKKFNIVEPVLAFLHSLFISNSLTVELTQDFLPYKQQLQLSLQNTRNHFSSTREEMEELKKRMKEAPQTCKLPGQPTIEGYLYTQEKWALGISWVKYYCQYEKETKTLTMTPMEQKPGAKQGPLDLTLKYCVRRKTESIDKRFCFDIETNERPGTITLQALSEANRRLWMEAMDGKEPIYHSPITKQQEMELNEVGFKFVRKCINIIETKGIKTEGLYRTVGSNIQVQKLLNAFFDPKCPGDVDFHNSDWDIKTITSSLKFYLRNLSEPVMTYRLHKELVSAAKSDNLDYRLGAIHSLVYKLPEKNREMLELLIRHLVNVCEHSKENLMTPSNMGVIFGPTLMRAQEDTVAAMMNIKFQNIVVEILIEHFGKIYLGPPEESAAPPVPPPRVTARRHKPITISKRLLRERTVFYTSSLDESEDEIQHQTPNGTITSSIEPPKPPQHPKLPIQRSGETDPGRKSPSRPILDGKLEPCPEVDVGKLVSRLQDGGTKITPKATNGPMPGSGPTKTPSFHIKRPAPRPLAHHKEGDADSFSKVRPPGEKPTIIRPPVRPPDPPCRAATPQKPEPKPDIVAGNAGEITSSVVASRTRFFETASRKTGSSQGRLPGDES</sequence>
<reference key="1">
    <citation type="journal article" date="1998" name="Nature">
        <title>Oligophrenin-1 encodes a rhoGAP protein involved in X-linked mental retardation.</title>
        <authorList>
            <person name="Billuart P."/>
            <person name="Bienvenu T."/>
            <person name="Ronce N."/>
            <person name="des Portes V."/>
            <person name="Vinet M.C."/>
            <person name="Zemni R."/>
            <person name="Roest Crollius H."/>
            <person name="Carrie A."/>
            <person name="Fauchereau F."/>
            <person name="Cherry M."/>
            <person name="Brillaut S."/>
            <person name="Hamel B."/>
            <person name="Fryns J.-P."/>
            <person name="Beldjord C."/>
            <person name="Kahn A."/>
            <person name="Moraine C."/>
            <person name="Chelly J."/>
        </authorList>
    </citation>
    <scope>NUCLEOTIDE SEQUENCE [MRNA] (ISOFORM 1)</scope>
    <scope>INVOLVEMENT IN MRXSBL</scope>
    <source>
        <tissue>Fetal brain</tissue>
    </source>
</reference>
<reference key="2">
    <citation type="journal article" date="1999" name="Eur. J. Hum. Genet.">
        <title>Deletion including the oligophrenin-1 gene associated with enlarged cerebral ventricles, cerebellar hypoplasia, seizures and ataxia.</title>
        <authorList>
            <person name="Tentler D."/>
            <person name="Gustavsson P."/>
            <person name="Leisti J."/>
            <person name="Schueler M."/>
            <person name="Chelly J."/>
            <person name="Timonen E."/>
            <person name="Anneren G."/>
            <person name="Willard H.F."/>
            <person name="Dahl N."/>
        </authorList>
    </citation>
    <scope>NUCLEOTIDE SEQUENCE [GENOMIC DNA]</scope>
    <scope>INVOLVEMENT IN MRXSBL</scope>
</reference>
<reference key="3">
    <citation type="journal article" date="2000" name="Ann. Genet.">
        <title>Determination of the gene structure of human oligophrenin-1 and identification of three novel polymorphisms by screening of DNA from 164 patients with non-specific X-linked mental retardation.</title>
        <authorList>
            <person name="Billuart P."/>
            <person name="Chelly J."/>
            <person name="Carrie A."/>
            <person name="Vinet M.C."/>
            <person name="Couvert P."/>
            <person name="McDonell N."/>
            <person name="Zemni R."/>
            <person name="Kahn A."/>
            <person name="Moraine C."/>
            <person name="Beldjord C."/>
            <person name="Bienvenu T."/>
        </authorList>
    </citation>
    <scope>NUCLEOTIDE SEQUENCE [GENOMIC DNA]</scope>
    <scope>VARIANTS THR-45 AND MET-301</scope>
</reference>
<reference key="4">
    <citation type="journal article" date="2003" name="Mol. Biol. Evol.">
        <title>Gene diversity patterns at 10 X-chromosomal loci in humans and chimpanzees.</title>
        <authorList>
            <person name="Kitano T."/>
            <person name="Schwarz C."/>
            <person name="Nickel B."/>
            <person name="Paeaebo S."/>
        </authorList>
    </citation>
    <scope>NUCLEOTIDE SEQUENCE [MRNA] (ISOFORM 1)</scope>
</reference>
<reference key="5">
    <citation type="journal article" date="2005" name="Nature">
        <title>The DNA sequence of the human X chromosome.</title>
        <authorList>
            <person name="Ross M.T."/>
            <person name="Grafham D.V."/>
            <person name="Coffey A.J."/>
            <person name="Scherer S."/>
            <person name="McLay K."/>
            <person name="Muzny D."/>
            <person name="Platzer M."/>
            <person name="Howell G.R."/>
            <person name="Burrows C."/>
            <person name="Bird C.P."/>
            <person name="Frankish A."/>
            <person name="Lovell F.L."/>
            <person name="Howe K.L."/>
            <person name="Ashurst J.L."/>
            <person name="Fulton R.S."/>
            <person name="Sudbrak R."/>
            <person name="Wen G."/>
            <person name="Jones M.C."/>
            <person name="Hurles M.E."/>
            <person name="Andrews T.D."/>
            <person name="Scott C.E."/>
            <person name="Searle S."/>
            <person name="Ramser J."/>
            <person name="Whittaker A."/>
            <person name="Deadman R."/>
            <person name="Carter N.P."/>
            <person name="Hunt S.E."/>
            <person name="Chen R."/>
            <person name="Cree A."/>
            <person name="Gunaratne P."/>
            <person name="Havlak P."/>
            <person name="Hodgson A."/>
            <person name="Metzker M.L."/>
            <person name="Richards S."/>
            <person name="Scott G."/>
            <person name="Steffen D."/>
            <person name="Sodergren E."/>
            <person name="Wheeler D.A."/>
            <person name="Worley K.C."/>
            <person name="Ainscough R."/>
            <person name="Ambrose K.D."/>
            <person name="Ansari-Lari M.A."/>
            <person name="Aradhya S."/>
            <person name="Ashwell R.I."/>
            <person name="Babbage A.K."/>
            <person name="Bagguley C.L."/>
            <person name="Ballabio A."/>
            <person name="Banerjee R."/>
            <person name="Barker G.E."/>
            <person name="Barlow K.F."/>
            <person name="Barrett I.P."/>
            <person name="Bates K.N."/>
            <person name="Beare D.M."/>
            <person name="Beasley H."/>
            <person name="Beasley O."/>
            <person name="Beck A."/>
            <person name="Bethel G."/>
            <person name="Blechschmidt K."/>
            <person name="Brady N."/>
            <person name="Bray-Allen S."/>
            <person name="Bridgeman A.M."/>
            <person name="Brown A.J."/>
            <person name="Brown M.J."/>
            <person name="Bonnin D."/>
            <person name="Bruford E.A."/>
            <person name="Buhay C."/>
            <person name="Burch P."/>
            <person name="Burford D."/>
            <person name="Burgess J."/>
            <person name="Burrill W."/>
            <person name="Burton J."/>
            <person name="Bye J.M."/>
            <person name="Carder C."/>
            <person name="Carrel L."/>
            <person name="Chako J."/>
            <person name="Chapman J.C."/>
            <person name="Chavez D."/>
            <person name="Chen E."/>
            <person name="Chen G."/>
            <person name="Chen Y."/>
            <person name="Chen Z."/>
            <person name="Chinault C."/>
            <person name="Ciccodicola A."/>
            <person name="Clark S.Y."/>
            <person name="Clarke G."/>
            <person name="Clee C.M."/>
            <person name="Clegg S."/>
            <person name="Clerc-Blankenburg K."/>
            <person name="Clifford K."/>
            <person name="Cobley V."/>
            <person name="Cole C.G."/>
            <person name="Conquer J.S."/>
            <person name="Corby N."/>
            <person name="Connor R.E."/>
            <person name="David R."/>
            <person name="Davies J."/>
            <person name="Davis C."/>
            <person name="Davis J."/>
            <person name="Delgado O."/>
            <person name="Deshazo D."/>
            <person name="Dhami P."/>
            <person name="Ding Y."/>
            <person name="Dinh H."/>
            <person name="Dodsworth S."/>
            <person name="Draper H."/>
            <person name="Dugan-Rocha S."/>
            <person name="Dunham A."/>
            <person name="Dunn M."/>
            <person name="Durbin K.J."/>
            <person name="Dutta I."/>
            <person name="Eades T."/>
            <person name="Ellwood M."/>
            <person name="Emery-Cohen A."/>
            <person name="Errington H."/>
            <person name="Evans K.L."/>
            <person name="Faulkner L."/>
            <person name="Francis F."/>
            <person name="Frankland J."/>
            <person name="Fraser A.E."/>
            <person name="Galgoczy P."/>
            <person name="Gilbert J."/>
            <person name="Gill R."/>
            <person name="Gloeckner G."/>
            <person name="Gregory S.G."/>
            <person name="Gribble S."/>
            <person name="Griffiths C."/>
            <person name="Grocock R."/>
            <person name="Gu Y."/>
            <person name="Gwilliam R."/>
            <person name="Hamilton C."/>
            <person name="Hart E.A."/>
            <person name="Hawes A."/>
            <person name="Heath P.D."/>
            <person name="Heitmann K."/>
            <person name="Hennig S."/>
            <person name="Hernandez J."/>
            <person name="Hinzmann B."/>
            <person name="Ho S."/>
            <person name="Hoffs M."/>
            <person name="Howden P.J."/>
            <person name="Huckle E.J."/>
            <person name="Hume J."/>
            <person name="Hunt P.J."/>
            <person name="Hunt A.R."/>
            <person name="Isherwood J."/>
            <person name="Jacob L."/>
            <person name="Johnson D."/>
            <person name="Jones S."/>
            <person name="de Jong P.J."/>
            <person name="Joseph S.S."/>
            <person name="Keenan S."/>
            <person name="Kelly S."/>
            <person name="Kershaw J.K."/>
            <person name="Khan Z."/>
            <person name="Kioschis P."/>
            <person name="Klages S."/>
            <person name="Knights A.J."/>
            <person name="Kosiura A."/>
            <person name="Kovar-Smith C."/>
            <person name="Laird G.K."/>
            <person name="Langford C."/>
            <person name="Lawlor S."/>
            <person name="Leversha M."/>
            <person name="Lewis L."/>
            <person name="Liu W."/>
            <person name="Lloyd C."/>
            <person name="Lloyd D.M."/>
            <person name="Loulseged H."/>
            <person name="Loveland J.E."/>
            <person name="Lovell J.D."/>
            <person name="Lozado R."/>
            <person name="Lu J."/>
            <person name="Lyne R."/>
            <person name="Ma J."/>
            <person name="Maheshwari M."/>
            <person name="Matthews L.H."/>
            <person name="McDowall J."/>
            <person name="McLaren S."/>
            <person name="McMurray A."/>
            <person name="Meidl P."/>
            <person name="Meitinger T."/>
            <person name="Milne S."/>
            <person name="Miner G."/>
            <person name="Mistry S.L."/>
            <person name="Morgan M."/>
            <person name="Morris S."/>
            <person name="Mueller I."/>
            <person name="Mullikin J.C."/>
            <person name="Nguyen N."/>
            <person name="Nordsiek G."/>
            <person name="Nyakatura G."/>
            <person name="O'dell C.N."/>
            <person name="Okwuonu G."/>
            <person name="Palmer S."/>
            <person name="Pandian R."/>
            <person name="Parker D."/>
            <person name="Parrish J."/>
            <person name="Pasternak S."/>
            <person name="Patel D."/>
            <person name="Pearce A.V."/>
            <person name="Pearson D.M."/>
            <person name="Pelan S.E."/>
            <person name="Perez L."/>
            <person name="Porter K.M."/>
            <person name="Ramsey Y."/>
            <person name="Reichwald K."/>
            <person name="Rhodes S."/>
            <person name="Ridler K.A."/>
            <person name="Schlessinger D."/>
            <person name="Schueler M.G."/>
            <person name="Sehra H.K."/>
            <person name="Shaw-Smith C."/>
            <person name="Shen H."/>
            <person name="Sheridan E.M."/>
            <person name="Shownkeen R."/>
            <person name="Skuce C.D."/>
            <person name="Smith M.L."/>
            <person name="Sotheran E.C."/>
            <person name="Steingruber H.E."/>
            <person name="Steward C.A."/>
            <person name="Storey R."/>
            <person name="Swann R.M."/>
            <person name="Swarbreck D."/>
            <person name="Tabor P.E."/>
            <person name="Taudien S."/>
            <person name="Taylor T."/>
            <person name="Teague B."/>
            <person name="Thomas K."/>
            <person name="Thorpe A."/>
            <person name="Timms K."/>
            <person name="Tracey A."/>
            <person name="Trevanion S."/>
            <person name="Tromans A.C."/>
            <person name="d'Urso M."/>
            <person name="Verduzco D."/>
            <person name="Villasana D."/>
            <person name="Waldron L."/>
            <person name="Wall M."/>
            <person name="Wang Q."/>
            <person name="Warren J."/>
            <person name="Warry G.L."/>
            <person name="Wei X."/>
            <person name="West A."/>
            <person name="Whitehead S.L."/>
            <person name="Whiteley M.N."/>
            <person name="Wilkinson J.E."/>
            <person name="Willey D.L."/>
            <person name="Williams G."/>
            <person name="Williams L."/>
            <person name="Williamson A."/>
            <person name="Williamson H."/>
            <person name="Wilming L."/>
            <person name="Woodmansey R.L."/>
            <person name="Wray P.W."/>
            <person name="Yen J."/>
            <person name="Zhang J."/>
            <person name="Zhou J."/>
            <person name="Zoghbi H."/>
            <person name="Zorilla S."/>
            <person name="Buck D."/>
            <person name="Reinhardt R."/>
            <person name="Poustka A."/>
            <person name="Rosenthal A."/>
            <person name="Lehrach H."/>
            <person name="Meindl A."/>
            <person name="Minx P.J."/>
            <person name="Hillier L.W."/>
            <person name="Willard H.F."/>
            <person name="Wilson R.K."/>
            <person name="Waterston R.H."/>
            <person name="Rice C.M."/>
            <person name="Vaudin M."/>
            <person name="Coulson A."/>
            <person name="Nelson D.L."/>
            <person name="Weinstock G."/>
            <person name="Sulston J.E."/>
            <person name="Durbin R.M."/>
            <person name="Hubbard T."/>
            <person name="Gibbs R.A."/>
            <person name="Beck S."/>
            <person name="Rogers J."/>
            <person name="Bentley D.R."/>
        </authorList>
    </citation>
    <scope>NUCLEOTIDE SEQUENCE [LARGE SCALE GENOMIC DNA]</scope>
</reference>
<reference key="6">
    <citation type="journal article" date="2004" name="Genome Res.">
        <title>The status, quality, and expansion of the NIH full-length cDNA project: the Mammalian Gene Collection (MGC).</title>
        <authorList>
            <consortium name="The MGC Project Team"/>
        </authorList>
    </citation>
    <scope>NUCLEOTIDE SEQUENCE [LARGE SCALE MRNA] (ISOFORMS 1 AND 2)</scope>
    <scope>VARIANT ILE-39</scope>
    <source>
        <tissue>Lung</tissue>
        <tissue>Placenta</tissue>
    </source>
</reference>
<reference key="7">
    <citation type="journal article" date="2013" name="J. Proteome Res.">
        <title>Toward a comprehensive characterization of a human cancer cell phosphoproteome.</title>
        <authorList>
            <person name="Zhou H."/>
            <person name="Di Palma S."/>
            <person name="Preisinger C."/>
            <person name="Peng M."/>
            <person name="Polat A.N."/>
            <person name="Heck A.J."/>
            <person name="Mohammed S."/>
        </authorList>
    </citation>
    <scope>IDENTIFICATION BY MASS SPECTROMETRY [LARGE SCALE ANALYSIS]</scope>
    <source>
        <tissue>Cervix carcinoma</tissue>
    </source>
</reference>
<reference key="8">
    <citation type="journal article" date="2011" name="Hum. Mutat.">
        <title>Insertion of 16 amino acids in the BAR domain of the oligophrenin 1 protein causes mental retardation and cerebellar hypoplasia in an Italian family.</title>
        <authorList>
            <person name="Pirozzi F."/>
            <person name="Di Raimo F.R."/>
            <person name="Zanni G."/>
            <person name="Bertini E."/>
            <person name="Billuart P."/>
            <person name="Tartaglione T."/>
            <person name="Tabolacci E."/>
            <person name="Brancaccio A."/>
            <person name="Neri G."/>
            <person name="Chiurazzi P."/>
        </authorList>
    </citation>
    <scope>VARIANT MRXSBL GLU-PHE-SER-LEU-LEU-MET-ASN-GLY-LEU-LYS-ILE-PHE-ILE-LYS-CYS-LEU-199 INS</scope>
</reference>
<protein>
    <recommendedName>
        <fullName>Oligophrenin-1</fullName>
    </recommendedName>
</protein>
<gene>
    <name type="primary">OPHN1</name>
</gene>
<organism>
    <name type="scientific">Homo sapiens</name>
    <name type="common">Human</name>
    <dbReference type="NCBI Taxonomy" id="9606"/>
    <lineage>
        <taxon>Eukaryota</taxon>
        <taxon>Metazoa</taxon>
        <taxon>Chordata</taxon>
        <taxon>Craniata</taxon>
        <taxon>Vertebrata</taxon>
        <taxon>Euteleostomi</taxon>
        <taxon>Mammalia</taxon>
        <taxon>Eutheria</taxon>
        <taxon>Euarchontoglires</taxon>
        <taxon>Primates</taxon>
        <taxon>Haplorrhini</taxon>
        <taxon>Catarrhini</taxon>
        <taxon>Hominidae</taxon>
        <taxon>Homo</taxon>
    </lineage>
</organism>
<feature type="chain" id="PRO_0000056760" description="Oligophrenin-1">
    <location>
        <begin position="1"/>
        <end position="802"/>
    </location>
</feature>
<feature type="domain" description="PH" evidence="4">
    <location>
        <begin position="265"/>
        <end position="368"/>
    </location>
</feature>
<feature type="domain" description="Rho-GAP" evidence="5">
    <location>
        <begin position="380"/>
        <end position="564"/>
    </location>
</feature>
<feature type="region of interest" description="Disordered" evidence="6">
    <location>
        <begin position="569"/>
        <end position="588"/>
    </location>
</feature>
<feature type="region of interest" description="Disordered" evidence="6">
    <location>
        <begin position="607"/>
        <end position="666"/>
    </location>
</feature>
<feature type="region of interest" description="Disordered" evidence="6">
    <location>
        <begin position="680"/>
        <end position="770"/>
    </location>
</feature>
<feature type="region of interest" description="Disordered" evidence="6">
    <location>
        <begin position="783"/>
        <end position="802"/>
    </location>
</feature>
<feature type="compositionally biased region" description="Polar residues" evidence="6">
    <location>
        <begin position="616"/>
        <end position="627"/>
    </location>
</feature>
<feature type="compositionally biased region" description="Basic and acidic residues" evidence="6">
    <location>
        <begin position="716"/>
        <end position="732"/>
    </location>
</feature>
<feature type="site" description="Arginine finger; crucial for GTP hydrolysis by stabilizing the transition state" evidence="5">
    <location>
        <position position="409"/>
    </location>
</feature>
<feature type="splice variant" id="VSP_055336" description="In isoform 2." evidence="12">
    <original>WALGISWVKYYCQYEKETKTLTMTPMEQKPGAKQ</original>
    <variation>CVWGHRGIHWVSISQELLPLVGCEFWAPLLFIDP</variation>
    <location>
        <begin position="278"/>
        <end position="311"/>
    </location>
</feature>
<feature type="splice variant" id="VSP_055337" description="In isoform 2." evidence="12">
    <location>
        <begin position="312"/>
        <end position="802"/>
    </location>
</feature>
<feature type="sequence variant" id="VAR_061184" description="In dbSNP:rs41303733." evidence="9">
    <original>V</original>
    <variation>I</variation>
    <location>
        <position position="39"/>
    </location>
</feature>
<feature type="sequence variant" id="VAR_013638" description="In dbSNP:rs148262378." evidence="8">
    <original>A</original>
    <variation>T</variation>
    <location>
        <position position="45"/>
    </location>
</feature>
<feature type="sequence variant" id="VAR_066746" description="In MRXSBL." evidence="10">
    <original>P</original>
    <variation>PEFSLLMNGLKIFIKCL</variation>
    <location>
        <position position="199"/>
    </location>
</feature>
<feature type="sequence variant" id="VAR_013639" description="In dbSNP:rs138108344." evidence="8">
    <original>T</original>
    <variation>M</variation>
    <location>
        <position position="301"/>
    </location>
</feature>
<feature type="sequence variant" id="VAR_033452" description="In dbSNP:rs36095561.">
    <original>M</original>
    <variation>I</variation>
    <location>
        <position position="693"/>
    </location>
</feature>
<proteinExistence type="evidence at protein level"/>